<sequence>MKRIAVLTSGGDAPGMNAAIRAVVRKAISEGIEVYGINHGYAGMVAGDIFPLTSASVGDKIGRGGTFLYSARYPEFAQVEGQLAGIEQLKKFGIEGVVVIGGDGSYHGAMRLTEHGFPAVGLPGTIDNDIVGTDFTIGFDTAVSTVVDALDKIRDTSSSHNRTFVVEVMGRNAGDIALNAGIAAGADDICIPEKEFKFENVVNNINKGYEKGKNHHIIVLAEGVMTGEEFATKLKEAGYKGDLRVSVLGHIQRGGSPTARDRVLASRMGARAVELLRDGIGGVAVGIRNEELVESPILGTAEEGALFSLTTEGGIKVNNPHKAGLELYRLNSALNNLNLN</sequence>
<dbReference type="EC" id="2.7.1.11" evidence="1"/>
<dbReference type="EMBL" id="CP000425">
    <property type="protein sequence ID" value="ABJ72967.1"/>
    <property type="molecule type" value="Genomic_DNA"/>
</dbReference>
<dbReference type="RefSeq" id="WP_003131080.1">
    <property type="nucleotide sequence ID" value="NC_008527.1"/>
</dbReference>
<dbReference type="SMR" id="Q02YK5"/>
<dbReference type="GeneID" id="89633566"/>
<dbReference type="KEGG" id="llc:LACR_1457"/>
<dbReference type="HOGENOM" id="CLU_020655_0_1_9"/>
<dbReference type="UniPathway" id="UPA00109">
    <property type="reaction ID" value="UER00182"/>
</dbReference>
<dbReference type="Proteomes" id="UP000000240">
    <property type="component" value="Chromosome"/>
</dbReference>
<dbReference type="GO" id="GO:0005945">
    <property type="term" value="C:6-phosphofructokinase complex"/>
    <property type="evidence" value="ECO:0007669"/>
    <property type="project" value="TreeGrafter"/>
</dbReference>
<dbReference type="GO" id="GO:0003872">
    <property type="term" value="F:6-phosphofructokinase activity"/>
    <property type="evidence" value="ECO:0007669"/>
    <property type="project" value="UniProtKB-UniRule"/>
</dbReference>
<dbReference type="GO" id="GO:0016208">
    <property type="term" value="F:AMP binding"/>
    <property type="evidence" value="ECO:0007669"/>
    <property type="project" value="TreeGrafter"/>
</dbReference>
<dbReference type="GO" id="GO:0005524">
    <property type="term" value="F:ATP binding"/>
    <property type="evidence" value="ECO:0007669"/>
    <property type="project" value="UniProtKB-KW"/>
</dbReference>
<dbReference type="GO" id="GO:0070095">
    <property type="term" value="F:fructose-6-phosphate binding"/>
    <property type="evidence" value="ECO:0007669"/>
    <property type="project" value="TreeGrafter"/>
</dbReference>
<dbReference type="GO" id="GO:0042802">
    <property type="term" value="F:identical protein binding"/>
    <property type="evidence" value="ECO:0007669"/>
    <property type="project" value="TreeGrafter"/>
</dbReference>
<dbReference type="GO" id="GO:0046872">
    <property type="term" value="F:metal ion binding"/>
    <property type="evidence" value="ECO:0007669"/>
    <property type="project" value="UniProtKB-KW"/>
</dbReference>
<dbReference type="GO" id="GO:0048029">
    <property type="term" value="F:monosaccharide binding"/>
    <property type="evidence" value="ECO:0007669"/>
    <property type="project" value="TreeGrafter"/>
</dbReference>
<dbReference type="GO" id="GO:0061621">
    <property type="term" value="P:canonical glycolysis"/>
    <property type="evidence" value="ECO:0007669"/>
    <property type="project" value="TreeGrafter"/>
</dbReference>
<dbReference type="GO" id="GO:0030388">
    <property type="term" value="P:fructose 1,6-bisphosphate metabolic process"/>
    <property type="evidence" value="ECO:0007669"/>
    <property type="project" value="TreeGrafter"/>
</dbReference>
<dbReference type="GO" id="GO:0006002">
    <property type="term" value="P:fructose 6-phosphate metabolic process"/>
    <property type="evidence" value="ECO:0007669"/>
    <property type="project" value="InterPro"/>
</dbReference>
<dbReference type="CDD" id="cd00763">
    <property type="entry name" value="Bacterial_PFK"/>
    <property type="match status" value="1"/>
</dbReference>
<dbReference type="FunFam" id="3.40.50.450:FF:000001">
    <property type="entry name" value="ATP-dependent 6-phosphofructokinase"/>
    <property type="match status" value="1"/>
</dbReference>
<dbReference type="FunFam" id="3.40.50.460:FF:000002">
    <property type="entry name" value="ATP-dependent 6-phosphofructokinase"/>
    <property type="match status" value="1"/>
</dbReference>
<dbReference type="Gene3D" id="3.40.50.450">
    <property type="match status" value="1"/>
</dbReference>
<dbReference type="Gene3D" id="3.40.50.460">
    <property type="entry name" value="Phosphofructokinase domain"/>
    <property type="match status" value="1"/>
</dbReference>
<dbReference type="HAMAP" id="MF_00339">
    <property type="entry name" value="Phosphofructokinase_I_B1"/>
    <property type="match status" value="1"/>
</dbReference>
<dbReference type="InterPro" id="IPR022953">
    <property type="entry name" value="ATP_PFK"/>
</dbReference>
<dbReference type="InterPro" id="IPR012003">
    <property type="entry name" value="ATP_PFK_prok-type"/>
</dbReference>
<dbReference type="InterPro" id="IPR012828">
    <property type="entry name" value="PFKA_ATP_prok"/>
</dbReference>
<dbReference type="InterPro" id="IPR015912">
    <property type="entry name" value="Phosphofructokinase_CS"/>
</dbReference>
<dbReference type="InterPro" id="IPR000023">
    <property type="entry name" value="Phosphofructokinase_dom"/>
</dbReference>
<dbReference type="InterPro" id="IPR035966">
    <property type="entry name" value="PKF_sf"/>
</dbReference>
<dbReference type="NCBIfam" id="TIGR02482">
    <property type="entry name" value="PFKA_ATP"/>
    <property type="match status" value="1"/>
</dbReference>
<dbReference type="NCBIfam" id="NF002872">
    <property type="entry name" value="PRK03202.1"/>
    <property type="match status" value="1"/>
</dbReference>
<dbReference type="PANTHER" id="PTHR13697:SF4">
    <property type="entry name" value="ATP-DEPENDENT 6-PHOSPHOFRUCTOKINASE"/>
    <property type="match status" value="1"/>
</dbReference>
<dbReference type="PANTHER" id="PTHR13697">
    <property type="entry name" value="PHOSPHOFRUCTOKINASE"/>
    <property type="match status" value="1"/>
</dbReference>
<dbReference type="Pfam" id="PF00365">
    <property type="entry name" value="PFK"/>
    <property type="match status" value="1"/>
</dbReference>
<dbReference type="PIRSF" id="PIRSF000532">
    <property type="entry name" value="ATP_PFK_prok"/>
    <property type="match status" value="1"/>
</dbReference>
<dbReference type="PRINTS" id="PR00476">
    <property type="entry name" value="PHFRCTKINASE"/>
</dbReference>
<dbReference type="SUPFAM" id="SSF53784">
    <property type="entry name" value="Phosphofructokinase"/>
    <property type="match status" value="1"/>
</dbReference>
<dbReference type="PROSITE" id="PS00433">
    <property type="entry name" value="PHOSPHOFRUCTOKINASE"/>
    <property type="match status" value="1"/>
</dbReference>
<gene>
    <name evidence="1" type="primary">pfkA</name>
    <name type="ordered locus">LACR_1457</name>
</gene>
<reference key="1">
    <citation type="journal article" date="2006" name="Proc. Natl. Acad. Sci. U.S.A.">
        <title>Comparative genomics of the lactic acid bacteria.</title>
        <authorList>
            <person name="Makarova K.S."/>
            <person name="Slesarev A."/>
            <person name="Wolf Y.I."/>
            <person name="Sorokin A."/>
            <person name="Mirkin B."/>
            <person name="Koonin E.V."/>
            <person name="Pavlov A."/>
            <person name="Pavlova N."/>
            <person name="Karamychev V."/>
            <person name="Polouchine N."/>
            <person name="Shakhova V."/>
            <person name="Grigoriev I."/>
            <person name="Lou Y."/>
            <person name="Rohksar D."/>
            <person name="Lucas S."/>
            <person name="Huang K."/>
            <person name="Goodstein D.M."/>
            <person name="Hawkins T."/>
            <person name="Plengvidhya V."/>
            <person name="Welker D."/>
            <person name="Hughes J."/>
            <person name="Goh Y."/>
            <person name="Benson A."/>
            <person name="Baldwin K."/>
            <person name="Lee J.-H."/>
            <person name="Diaz-Muniz I."/>
            <person name="Dosti B."/>
            <person name="Smeianov V."/>
            <person name="Wechter W."/>
            <person name="Barabote R."/>
            <person name="Lorca G."/>
            <person name="Altermann E."/>
            <person name="Barrangou R."/>
            <person name="Ganesan B."/>
            <person name="Xie Y."/>
            <person name="Rawsthorne H."/>
            <person name="Tamir D."/>
            <person name="Parker C."/>
            <person name="Breidt F."/>
            <person name="Broadbent J.R."/>
            <person name="Hutkins R."/>
            <person name="O'Sullivan D."/>
            <person name="Steele J."/>
            <person name="Unlu G."/>
            <person name="Saier M.H. Jr."/>
            <person name="Klaenhammer T."/>
            <person name="Richardson P."/>
            <person name="Kozyavkin S."/>
            <person name="Weimer B.C."/>
            <person name="Mills D.A."/>
        </authorList>
    </citation>
    <scope>NUCLEOTIDE SEQUENCE [LARGE SCALE GENOMIC DNA]</scope>
    <source>
        <strain>SK11</strain>
    </source>
</reference>
<feature type="chain" id="PRO_1000059774" description="ATP-dependent 6-phosphofructokinase">
    <location>
        <begin position="1"/>
        <end position="340"/>
    </location>
</feature>
<feature type="active site" description="Proton acceptor" evidence="1">
    <location>
        <position position="127"/>
    </location>
</feature>
<feature type="binding site" evidence="1">
    <location>
        <position position="11"/>
    </location>
    <ligand>
        <name>ATP</name>
        <dbReference type="ChEBI" id="CHEBI:30616"/>
    </ligand>
</feature>
<feature type="binding site" evidence="1">
    <location>
        <begin position="21"/>
        <end position="25"/>
    </location>
    <ligand>
        <name>ADP</name>
        <dbReference type="ChEBI" id="CHEBI:456216"/>
        <note>allosteric activator; ligand shared between dimeric partners</note>
    </ligand>
</feature>
<feature type="binding site" evidence="1">
    <location>
        <begin position="72"/>
        <end position="73"/>
    </location>
    <ligand>
        <name>ATP</name>
        <dbReference type="ChEBI" id="CHEBI:30616"/>
    </ligand>
</feature>
<feature type="binding site" evidence="1">
    <location>
        <begin position="102"/>
        <end position="105"/>
    </location>
    <ligand>
        <name>ATP</name>
        <dbReference type="ChEBI" id="CHEBI:30616"/>
    </ligand>
</feature>
<feature type="binding site" evidence="1">
    <location>
        <position position="103"/>
    </location>
    <ligand>
        <name>Mg(2+)</name>
        <dbReference type="ChEBI" id="CHEBI:18420"/>
        <note>catalytic</note>
    </ligand>
</feature>
<feature type="binding site" description="in other chain" evidence="1">
    <location>
        <begin position="125"/>
        <end position="127"/>
    </location>
    <ligand>
        <name>substrate</name>
        <note>ligand shared between dimeric partners</note>
    </ligand>
</feature>
<feature type="binding site" description="in other chain" evidence="1">
    <location>
        <position position="154"/>
    </location>
    <ligand>
        <name>ADP</name>
        <dbReference type="ChEBI" id="CHEBI:456216"/>
        <note>allosteric activator; ligand shared between dimeric partners</note>
    </ligand>
</feature>
<feature type="binding site" evidence="1">
    <location>
        <position position="162"/>
    </location>
    <ligand>
        <name>substrate</name>
        <note>ligand shared between dimeric partners</note>
    </ligand>
</feature>
<feature type="binding site" description="in other chain" evidence="1">
    <location>
        <begin position="169"/>
        <end position="171"/>
    </location>
    <ligand>
        <name>substrate</name>
        <note>ligand shared between dimeric partners</note>
    </ligand>
</feature>
<feature type="binding site" description="in other chain" evidence="1">
    <location>
        <begin position="185"/>
        <end position="187"/>
    </location>
    <ligand>
        <name>ADP</name>
        <dbReference type="ChEBI" id="CHEBI:456216"/>
        <note>allosteric activator; ligand shared between dimeric partners</note>
    </ligand>
</feature>
<feature type="binding site" description="in other chain" evidence="1">
    <location>
        <position position="211"/>
    </location>
    <ligand>
        <name>ADP</name>
        <dbReference type="ChEBI" id="CHEBI:456216"/>
        <note>allosteric activator; ligand shared between dimeric partners</note>
    </ligand>
</feature>
<feature type="binding site" description="in other chain" evidence="1">
    <location>
        <begin position="213"/>
        <end position="215"/>
    </location>
    <ligand>
        <name>ADP</name>
        <dbReference type="ChEBI" id="CHEBI:456216"/>
        <note>allosteric activator; ligand shared between dimeric partners</note>
    </ligand>
</feature>
<feature type="binding site" description="in other chain" evidence="1">
    <location>
        <position position="222"/>
    </location>
    <ligand>
        <name>substrate</name>
        <note>ligand shared between dimeric partners</note>
    </ligand>
</feature>
<feature type="binding site" evidence="1">
    <location>
        <position position="244"/>
    </location>
    <ligand>
        <name>substrate</name>
        <note>ligand shared between dimeric partners</note>
    </ligand>
</feature>
<feature type="binding site" description="in other chain" evidence="1">
    <location>
        <begin position="250"/>
        <end position="253"/>
    </location>
    <ligand>
        <name>substrate</name>
        <note>ligand shared between dimeric partners</note>
    </ligand>
</feature>
<organism>
    <name type="scientific">Lactococcus lactis subsp. cremoris (strain SK11)</name>
    <dbReference type="NCBI Taxonomy" id="272622"/>
    <lineage>
        <taxon>Bacteria</taxon>
        <taxon>Bacillati</taxon>
        <taxon>Bacillota</taxon>
        <taxon>Bacilli</taxon>
        <taxon>Lactobacillales</taxon>
        <taxon>Streptococcaceae</taxon>
        <taxon>Lactococcus</taxon>
        <taxon>Lactococcus cremoris subsp. cremoris</taxon>
    </lineage>
</organism>
<evidence type="ECO:0000255" key="1">
    <source>
        <dbReference type="HAMAP-Rule" id="MF_00339"/>
    </source>
</evidence>
<comment type="function">
    <text evidence="1">Catalyzes the phosphorylation of D-fructose 6-phosphate to fructose 1,6-bisphosphate by ATP, the first committing step of glycolysis.</text>
</comment>
<comment type="catalytic activity">
    <reaction evidence="1">
        <text>beta-D-fructose 6-phosphate + ATP = beta-D-fructose 1,6-bisphosphate + ADP + H(+)</text>
        <dbReference type="Rhea" id="RHEA:16109"/>
        <dbReference type="ChEBI" id="CHEBI:15378"/>
        <dbReference type="ChEBI" id="CHEBI:30616"/>
        <dbReference type="ChEBI" id="CHEBI:32966"/>
        <dbReference type="ChEBI" id="CHEBI:57634"/>
        <dbReference type="ChEBI" id="CHEBI:456216"/>
        <dbReference type="EC" id="2.7.1.11"/>
    </reaction>
</comment>
<comment type="cofactor">
    <cofactor evidence="1">
        <name>Mg(2+)</name>
        <dbReference type="ChEBI" id="CHEBI:18420"/>
    </cofactor>
</comment>
<comment type="activity regulation">
    <text evidence="1">Allosterically activated by ADP and other diphosphonucleosides, and allosterically inhibited by phosphoenolpyruvate.</text>
</comment>
<comment type="pathway">
    <text evidence="1">Carbohydrate degradation; glycolysis; D-glyceraldehyde 3-phosphate and glycerone phosphate from D-glucose: step 3/4.</text>
</comment>
<comment type="subunit">
    <text evidence="1">Homotetramer.</text>
</comment>
<comment type="subcellular location">
    <subcellularLocation>
        <location evidence="1">Cytoplasm</location>
    </subcellularLocation>
</comment>
<comment type="similarity">
    <text evidence="1">Belongs to the phosphofructokinase type A (PFKA) family. ATP-dependent PFK group I subfamily. Prokaryotic clade 'B1' sub-subfamily.</text>
</comment>
<protein>
    <recommendedName>
        <fullName evidence="1">ATP-dependent 6-phosphofructokinase</fullName>
        <shortName evidence="1">ATP-PFK</shortName>
        <shortName evidence="1">Phosphofructokinase</shortName>
        <ecNumber evidence="1">2.7.1.11</ecNumber>
    </recommendedName>
    <alternativeName>
        <fullName evidence="1">Phosphohexokinase</fullName>
    </alternativeName>
</protein>
<keyword id="KW-0021">Allosteric enzyme</keyword>
<keyword id="KW-0067">ATP-binding</keyword>
<keyword id="KW-0963">Cytoplasm</keyword>
<keyword id="KW-0324">Glycolysis</keyword>
<keyword id="KW-0418">Kinase</keyword>
<keyword id="KW-0460">Magnesium</keyword>
<keyword id="KW-0479">Metal-binding</keyword>
<keyword id="KW-0547">Nucleotide-binding</keyword>
<keyword id="KW-0808">Transferase</keyword>
<proteinExistence type="inferred from homology"/>
<accession>Q02YK5</accession>
<name>PFKA_LACLS</name>